<sequence length="282" mass="32204">MNKSQLYPDSPLTDQDFNQLDQTVIEAARRQLVGRRFIELYGPLGRGMQSVFNDIFMESHEAKMDFQGSFDTEVESSRRVNYTIPMLYKDFVLYWRDLEQSKALDIPIDFSVAANAARDVAFLEDQMIFHGSKEFDIPGLMNVKGRLTHLIGNWYESGNAFQDIVEARNKLLEMNHNGPYALVLSPELYSLLHRVHKDTNVLEIEHVRELITAGVFQSPVLKGKSGVIVNTGRNNLDLAISEDFETAYLGEEGMNHPFRVYETVVLRIKRPAAICTLIDPEE</sequence>
<accession>A0A0F5HPP7</accession>
<accession>A0A0F5IDU5</accession>
<organism>
    <name type="scientific">Bacillus thermotolerans</name>
    <name type="common">Quasibacillus thermotolerans</name>
    <dbReference type="NCBI Taxonomy" id="1221996"/>
    <lineage>
        <taxon>Bacteria</taxon>
        <taxon>Bacillati</taxon>
        <taxon>Bacillota</taxon>
        <taxon>Bacilli</taxon>
        <taxon>Bacillales</taxon>
        <taxon>Bacillaceae</taxon>
        <taxon>Bacillus</taxon>
    </lineage>
</organism>
<evidence type="ECO:0000269" key="1">
    <source>
    </source>
</evidence>
<evidence type="ECO:0000269" key="2">
    <source>
    </source>
</evidence>
<evidence type="ECO:0000269" key="3">
    <source>
    </source>
</evidence>
<evidence type="ECO:0000303" key="4">
    <source>
    </source>
</evidence>
<evidence type="ECO:0000305" key="5"/>
<evidence type="ECO:0000305" key="6">
    <source>
    </source>
</evidence>
<evidence type="ECO:0007744" key="7">
    <source>
        <dbReference type="PDB" id="6NJ8"/>
    </source>
</evidence>
<dbReference type="EMBL" id="JWIR02000003">
    <property type="protein sequence ID" value="KKB43347.1"/>
    <property type="molecule type" value="Genomic_DNA"/>
</dbReference>
<dbReference type="RefSeq" id="WP_039238471.1">
    <property type="nucleotide sequence ID" value="NZ_JWIQ02000107.1"/>
</dbReference>
<dbReference type="PDB" id="6NJ8">
    <property type="method" value="EM"/>
    <property type="resolution" value="3.85 A"/>
    <property type="chains" value="A/B/C/D=1-282"/>
</dbReference>
<dbReference type="PDB" id="7MH2">
    <property type="method" value="EM"/>
    <property type="resolution" value="3.57 A"/>
    <property type="chains" value="A/B/C/D=1-282"/>
</dbReference>
<dbReference type="PDB" id="8RVJ">
    <property type="method" value="EM"/>
    <property type="resolution" value="3.10 A"/>
    <property type="chains" value="A/B/C/D=1-282"/>
</dbReference>
<dbReference type="PDBsum" id="6NJ8"/>
<dbReference type="PDBsum" id="7MH2"/>
<dbReference type="PDBsum" id="8RVJ"/>
<dbReference type="EMDB" id="EMD-23834"/>
<dbReference type="EMDB" id="EMD-9383"/>
<dbReference type="SMR" id="A0A0F5HPP7"/>
<dbReference type="STRING" id="1221996.QY95_01592"/>
<dbReference type="OrthoDB" id="2922at2"/>
<dbReference type="Proteomes" id="UP000031563">
    <property type="component" value="Unassembled WGS sequence"/>
</dbReference>
<dbReference type="GO" id="GO:0140737">
    <property type="term" value="C:encapsulin nanocompartment"/>
    <property type="evidence" value="ECO:0000314"/>
    <property type="project" value="UniProtKB"/>
</dbReference>
<dbReference type="GO" id="GO:0006879">
    <property type="term" value="P:intracellular iron ion homeostasis"/>
    <property type="evidence" value="ECO:0007669"/>
    <property type="project" value="UniProtKB-KW"/>
</dbReference>
<dbReference type="GO" id="GO:0006826">
    <property type="term" value="P:iron ion transport"/>
    <property type="evidence" value="ECO:0007669"/>
    <property type="project" value="UniProtKB-KW"/>
</dbReference>
<dbReference type="Gene3D" id="3.30.2400.30">
    <property type="match status" value="1"/>
</dbReference>
<dbReference type="Gene3D" id="3.30.2320.10">
    <property type="entry name" value="hypothetical protein PF0899 domain"/>
    <property type="match status" value="1"/>
</dbReference>
<dbReference type="InterPro" id="IPR007544">
    <property type="entry name" value="ENCAP"/>
</dbReference>
<dbReference type="InterPro" id="IPR051429">
    <property type="entry name" value="Encapsulin_nc"/>
</dbReference>
<dbReference type="NCBIfam" id="NF041155">
    <property type="entry name" value="encap_f1"/>
    <property type="match status" value="1"/>
</dbReference>
<dbReference type="PANTHER" id="PTHR37165">
    <property type="entry name" value="PEPTIDASE U56 FAMILY"/>
    <property type="match status" value="1"/>
</dbReference>
<dbReference type="PANTHER" id="PTHR37165:SF1">
    <property type="entry name" value="TYPE 1 ENCAPSULIN SHELL PROTEIN"/>
    <property type="match status" value="1"/>
</dbReference>
<dbReference type="Pfam" id="PF04454">
    <property type="entry name" value="Linocin_M18"/>
    <property type="match status" value="1"/>
</dbReference>
<dbReference type="SUPFAM" id="SSF56563">
    <property type="entry name" value="Major capsid protein gp5"/>
    <property type="match status" value="1"/>
</dbReference>
<keyword id="KW-0002">3D-structure</keyword>
<keyword id="KW-1284">Encapsulin nanocompartment</keyword>
<keyword id="KW-0406">Ion transport</keyword>
<keyword id="KW-0408">Iron</keyword>
<keyword id="KW-0409">Iron storage</keyword>
<keyword id="KW-0410">Iron transport</keyword>
<keyword id="KW-1185">Reference proteome</keyword>
<keyword id="KW-0813">Transport</keyword>
<reference key="1">
    <citation type="journal article" date="2017" name="Syst. Appl. Microbiol.">
        <title>Examination into the taxonomic position of Bacillus thermotolerans Yang et al., 2013, proposal for its reclassification into a new genus and species Quasibacillus thermotolerans gen. nov., comb. nov. and reclassification of B. encimensis Dastager et al., 2015 as a later heterotypic synonym of B. badius.</title>
        <authorList>
            <person name="Verma A."/>
            <person name="Pal Y."/>
            <person name="Khatri I."/>
            <person name="Ojha A.K."/>
            <person name="Gruber-Vodicka H."/>
            <person name="Schumann P."/>
            <person name="Dastager S."/>
            <person name="Subramanian S."/>
            <person name="Mayilraj S."/>
            <person name="Krishnamurthi S."/>
        </authorList>
    </citation>
    <scope>NUCLEOTIDE SEQUENCE [LARGE SCALE GENOMIC DNA]</scope>
    <source>
        <strain>MTCC 10057 / 5.5LF 38TD</strain>
        <strain>MTCC 8252</strain>
    </source>
</reference>
<reference key="2">
    <citation type="journal article" date="2017" name="Nat. Microbiol.">
        <title>Widespread distribution of encapsulin nanocompartments reveals functional diversity.</title>
        <authorList>
            <person name="Giessen T.W."/>
            <person name="Silver P.A."/>
        </authorList>
    </citation>
    <scope>FUNCTION</scope>
    <scope>SUBUNIT</scope>
    <scope>SUBCELLULAR LOCATION</scope>
    <source>
        <strain>MTCC 10057 / 5.5LF 38TD</strain>
    </source>
</reference>
<reference key="3">
    <citation type="journal article" date="2019" name="ACS Nano">
        <title>Iron-Sequestering Nanocompartments as Multiplexed Electron Microscopy Gene Reporters.</title>
        <authorList>
            <person name="Sigmund F."/>
            <person name="Pettinger S."/>
            <person name="Kube M."/>
            <person name="Schneider F."/>
            <person name="Schifferer M."/>
            <person name="Schneider S."/>
            <person name="Efremova M.V."/>
            <person name="Pujol-Marti J."/>
            <person name="Aichler M."/>
            <person name="Walch A."/>
            <person name="Misgeld T."/>
            <person name="Dietz H."/>
            <person name="Westmeyer G.G."/>
        </authorList>
    </citation>
    <scope>FUNCTION</scope>
    <scope>SUBUNIT</scope>
    <scope>SUBCELLULAR LOCATION</scope>
    <scope>BIOTECHNOLOGY</scope>
</reference>
<reference key="4">
    <citation type="journal article" date="2021" name="Nat. Commun.">
        <title>Large-scale computational discovery and analysis of virus-derived microbial nanocompartments.</title>
        <authorList>
            <person name="Andreas M.P."/>
            <person name="Giessen T.W."/>
        </authorList>
    </citation>
    <scope>CLASSIFICATION</scope>
</reference>
<reference evidence="7" key="5">
    <citation type="journal article" date="2019" name="Elife">
        <title>Large protein organelles form a new iron sequestration system with high storage capacity.</title>
        <authorList>
            <person name="Giessen T.W."/>
            <person name="Orlando B.J."/>
            <person name="Verdegaal A.A."/>
            <person name="Chambers M.G."/>
            <person name="Gardener J."/>
            <person name="Bell D.C."/>
            <person name="Birrane G."/>
            <person name="Liao M."/>
            <person name="Silver P.A."/>
        </authorList>
    </citation>
    <scope>STRUCTURE BY ELECTRON MICROSCOPY (3.85 ANGSTROMS)</scope>
    <scope>FUNCTION</scope>
    <scope>BIOPHYSICOCHEMICAL PROPERTIES</scope>
    <scope>SUBUNIT</scope>
    <scope>SUBCELLULAR LOCATION</scope>
    <scope>DOMAIN</scope>
    <source>
        <strain>MTCC 8252</strain>
    </source>
</reference>
<protein>
    <recommendedName>
        <fullName>Type 1 encapsulin shell protein</fullName>
    </recommendedName>
    <alternativeName>
        <fullName evidence="4">IMEF encapsulin</fullName>
    </alternativeName>
</protein>
<name>ENCAP_BACTR</name>
<feature type="chain" id="PRO_0000455316" description="Type 1 encapsulin shell protein">
    <location>
        <begin position="1"/>
        <end position="282"/>
    </location>
</feature>
<feature type="site" description="3-fold pore central residue" evidence="3">
    <location>
        <position position="9"/>
    </location>
</feature>
<feature type="site" description="3-fold pore central residue" evidence="3">
    <location>
        <position position="71"/>
    </location>
</feature>
<feature type="site" description="5-fold pore central residue" evidence="3">
    <location>
        <position position="200"/>
    </location>
</feature>
<feature type="site" description="3-fold pore central residue" evidence="3">
    <location>
        <position position="251"/>
    </location>
</feature>
<feature type="site" description="3-fold pore central residue" evidence="3">
    <location>
        <position position="252"/>
    </location>
</feature>
<comment type="function">
    <text evidence="1 2 3 6">Shell component of a type 1 encapsulin nanocompartment. Assembles into proteinaceous icosahedral shells 42-43 nm in diameter with an iron- and phosphorus-rich core (1Fe:1.1P) which can store over 23,000-35,000 iron atoms (with a calculated maximum of 83,000 Fe). There are 2 types of negatively charged open pores in the cryo-electron structure; a 3-fold pore where 3 hexamers meet with a minimal size of 7.2 Angstroms and a 5-fold pore where pentamers meet with a minimal size of 2.3 Angstroms. The 2-fold pore seen in other encapsulin nanocompartments is closed. Empty compartments can be generated in E.coli (PubMed:28263314, PubMed:31194509, PubMed:31282860). Both types of pore have extra density in their centers in the structure (PubMed:31282860). 2 different cargo proteins have been identified (IMEF and Fer); when both are expressed in E.coli with the shell protein only IMEF is detected within the nanocompartment. E.coli expressing all 3 genes stores the largest amount of iron and is protected from Fe/H2O2-induced oxidative stress (PubMed:28263314). Part of the iron-mineralizing encapsulin-associated Firmicute (IMEF) system (Probable).</text>
</comment>
<comment type="biophysicochemical properties">
    <temperatureDependence>
        <text evidence="3">The empty encapsulin nanocompartment is stable until 86.6 degrees Celsius, when loaded with cargo protein is stable until 88.9 degrees Celsius and when grown in high-iron conditions is stable until 91.8 degrees Celsius.</text>
    </temperatureDependence>
</comment>
<comment type="subunit">
    <text evidence="1 2 3">Initially thought to form a 180 subunit shell (PubMed:28263314). Forms hollow shells composed of 240 subunits, making a shell about 42-43 nm in diameter (PubMed:31194509, PubMed:31282860). The monomer is capable of assuming 4 different conformations which allows packaging into the icosahedron. The shell has 12 pentameric and 30 hexameric capsomers which form the vertices and faces of the icosahedral nanocompartment (PubMed:31282860).</text>
</comment>
<comment type="subcellular location">
    <subcellularLocation>
        <location evidence="2 3">Encapsulin nanocompartment</location>
    </subcellularLocation>
</comment>
<comment type="domain">
    <text evidence="3">Formed of E- and discontuous A- and P-loops. A-loops form the main pores while A- and E-loops are the most flexible parts. E- and P-loops of neighboring monomers arrange head-to-tail and form a chainmail topology.</text>
</comment>
<comment type="biotechnology">
    <text evidence="2">The encapsulin and cargo pair can be overexpressed in E.coli and in human HEK293T cells. In HEK293T in the presence of 0.5 M ferrous ammonium sulfate nanocompartments can be detected and used as cell markers. Can also be targeted to cell membranes by addition of a farnesylation signal to its C-terminus. Coexpression of this nanocompartment with a smaller nanocompartment from M.xanthus (AC Q1D6H4) allows of expression of different sized iron-rich particles. The encapsulin shell proteins do not seem to mix.</text>
</comment>
<comment type="similarity">
    <text evidence="5">Belongs to the encapsulin family. Family 1 subfamily.</text>
</comment>
<gene>
    <name evidence="4" type="primary">enc</name>
    <name type="ORF">QY95_01592</name>
</gene>
<proteinExistence type="evidence at protein level"/>